<comment type="function">
    <text evidence="2">May bind amino acids.</text>
</comment>
<comment type="interaction">
    <interactant intactId="EBI-4425980">
        <id>Q9SGA0</id>
    </interactant>
    <interactant intactId="EBI-4435064">
        <id>Q8H1G0</id>
        <label>GATA28</label>
    </interactant>
    <organismsDiffer>false</organismsDiffer>
    <experiments>4</experiments>
</comment>
<comment type="sequence caution" evidence="3">
    <conflict type="erroneous gene model prediction">
        <sequence resource="EMBL-CDS" id="AAF03449"/>
    </conflict>
</comment>
<gene>
    <name evidence="2" type="primary">ACR6</name>
    <name evidence="5" type="ordered locus">At3g01990</name>
    <name evidence="7" type="ORF">F1C9.23</name>
    <name evidence="6" type="ORF">F28J7.32</name>
</gene>
<protein>
    <recommendedName>
        <fullName evidence="3">ACT domain-containing protein ACR6</fullName>
    </recommendedName>
    <alternativeName>
        <fullName evidence="2">Protein ACT DOMAIN REPEATS 6</fullName>
    </alternativeName>
</protein>
<proteinExistence type="evidence at protein level"/>
<evidence type="ECO:0000255" key="1">
    <source>
        <dbReference type="PROSITE-ProRule" id="PRU01007"/>
    </source>
</evidence>
<evidence type="ECO:0000303" key="2">
    <source>
    </source>
</evidence>
<evidence type="ECO:0000305" key="3"/>
<evidence type="ECO:0000305" key="4">
    <source>
    </source>
</evidence>
<evidence type="ECO:0000312" key="5">
    <source>
        <dbReference type="Araport" id="AT3G01990"/>
    </source>
</evidence>
<evidence type="ECO:0000312" key="6">
    <source>
        <dbReference type="EMBL" id="AAF03449.1"/>
    </source>
</evidence>
<evidence type="ECO:0000312" key="7">
    <source>
        <dbReference type="EMBL" id="AAF14836.1"/>
    </source>
</evidence>
<sequence length="433" mass="48742">MDDDEYAKLIRRMNPPRVVIDNNASDDATVIQVDSVNKHGTLLEVVQVLTDMNLVIKKAYISSDGGWFMDVFKVIDQDGNKIRDTQVLDYIQKRIESNAGWFIPPLRSSVGVMPTDEYTSIELAGTDRPGLLSEVSAVLTDLHCNVVNAEIWTHNTRAAAVIHVTDNSTHSAITDPIRLSTIKELLCNVVRTNSGSRAAKTVFSCSDTHRERRLHQIMFDDRDYEGVKRARTSASRPSVTLMNIEKDYTVVTMRSKDRPKLVFDVVCTLTDMQYVVFHGMVSTEPVEAYQEFYIRHVDGLPINSEAEQERVIQCLEAAIERRASEGLELELSAEDRVGLLSDITRTFRENSLTIVRAEISTREGKAKDTFYVTDVTGNPVESKIVESIRQQIGVSKLKVKKKEKEHCSVLGTSRPSHETTTMGYLLSNIFKPK</sequence>
<accession>Q9SGA0</accession>
<accession>Q9SGI1</accession>
<name>ACR6_ARATH</name>
<feature type="chain" id="PRO_0000431460" description="ACT domain-containing protein ACR6">
    <location>
        <begin position="1"/>
        <end position="433"/>
    </location>
</feature>
<feature type="domain" description="ACT 1" evidence="1">
    <location>
        <begin position="30"/>
        <end position="110"/>
    </location>
</feature>
<feature type="domain" description="ACT 2" evidence="1">
    <location>
        <begin position="120"/>
        <end position="207"/>
    </location>
</feature>
<feature type="domain" description="ACT 3" evidence="4">
    <location>
        <begin position="250"/>
        <end position="326"/>
    </location>
</feature>
<feature type="domain" description="ACT 4" evidence="1">
    <location>
        <begin position="328"/>
        <end position="402"/>
    </location>
</feature>
<reference key="1">
    <citation type="journal article" date="2002" name="Plant Physiol.">
        <title>Molecular characterization of a novel gene family encoding ACT domain repeat proteins in Arabidopsis.</title>
        <authorList>
            <person name="Hsieh M.-H."/>
            <person name="Goodman H.M."/>
        </authorList>
    </citation>
    <scope>NUCLEOTIDE SEQUENCE [MRNA]</scope>
    <scope>FUNCTION</scope>
</reference>
<reference key="2">
    <citation type="journal article" date="2000" name="Nature">
        <title>Sequence and analysis of chromosome 3 of the plant Arabidopsis thaliana.</title>
        <authorList>
            <person name="Salanoubat M."/>
            <person name="Lemcke K."/>
            <person name="Rieger M."/>
            <person name="Ansorge W."/>
            <person name="Unseld M."/>
            <person name="Fartmann B."/>
            <person name="Valle G."/>
            <person name="Bloecker H."/>
            <person name="Perez-Alonso M."/>
            <person name="Obermaier B."/>
            <person name="Delseny M."/>
            <person name="Boutry M."/>
            <person name="Grivell L.A."/>
            <person name="Mache R."/>
            <person name="Puigdomenech P."/>
            <person name="De Simone V."/>
            <person name="Choisne N."/>
            <person name="Artiguenave F."/>
            <person name="Robert C."/>
            <person name="Brottier P."/>
            <person name="Wincker P."/>
            <person name="Cattolico L."/>
            <person name="Weissenbach J."/>
            <person name="Saurin W."/>
            <person name="Quetier F."/>
            <person name="Schaefer M."/>
            <person name="Mueller-Auer S."/>
            <person name="Gabel C."/>
            <person name="Fuchs M."/>
            <person name="Benes V."/>
            <person name="Wurmbach E."/>
            <person name="Drzonek H."/>
            <person name="Erfle H."/>
            <person name="Jordan N."/>
            <person name="Bangert S."/>
            <person name="Wiedelmann R."/>
            <person name="Kranz H."/>
            <person name="Voss H."/>
            <person name="Holland R."/>
            <person name="Brandt P."/>
            <person name="Nyakatura G."/>
            <person name="Vezzi A."/>
            <person name="D'Angelo M."/>
            <person name="Pallavicini A."/>
            <person name="Toppo S."/>
            <person name="Simionati B."/>
            <person name="Conrad A."/>
            <person name="Hornischer K."/>
            <person name="Kauer G."/>
            <person name="Loehnert T.-H."/>
            <person name="Nordsiek G."/>
            <person name="Reichelt J."/>
            <person name="Scharfe M."/>
            <person name="Schoen O."/>
            <person name="Bargues M."/>
            <person name="Terol J."/>
            <person name="Climent J."/>
            <person name="Navarro P."/>
            <person name="Collado C."/>
            <person name="Perez-Perez A."/>
            <person name="Ottenwaelder B."/>
            <person name="Duchemin D."/>
            <person name="Cooke R."/>
            <person name="Laudie M."/>
            <person name="Berger-Llauro C."/>
            <person name="Purnelle B."/>
            <person name="Masuy D."/>
            <person name="de Haan M."/>
            <person name="Maarse A.C."/>
            <person name="Alcaraz J.-P."/>
            <person name="Cottet A."/>
            <person name="Casacuberta E."/>
            <person name="Monfort A."/>
            <person name="Argiriou A."/>
            <person name="Flores M."/>
            <person name="Liguori R."/>
            <person name="Vitale D."/>
            <person name="Mannhaupt G."/>
            <person name="Haase D."/>
            <person name="Schoof H."/>
            <person name="Rudd S."/>
            <person name="Zaccaria P."/>
            <person name="Mewes H.-W."/>
            <person name="Mayer K.F.X."/>
            <person name="Kaul S."/>
            <person name="Town C.D."/>
            <person name="Koo H.L."/>
            <person name="Tallon L.J."/>
            <person name="Jenkins J."/>
            <person name="Rooney T."/>
            <person name="Rizzo M."/>
            <person name="Walts A."/>
            <person name="Utterback T."/>
            <person name="Fujii C.Y."/>
            <person name="Shea T.P."/>
            <person name="Creasy T.H."/>
            <person name="Haas B."/>
            <person name="Maiti R."/>
            <person name="Wu D."/>
            <person name="Peterson J."/>
            <person name="Van Aken S."/>
            <person name="Pai G."/>
            <person name="Militscher J."/>
            <person name="Sellers P."/>
            <person name="Gill J.E."/>
            <person name="Feldblyum T.V."/>
            <person name="Preuss D."/>
            <person name="Lin X."/>
            <person name="Nierman W.C."/>
            <person name="Salzberg S.L."/>
            <person name="White O."/>
            <person name="Venter J.C."/>
            <person name="Fraser C.M."/>
            <person name="Kaneko T."/>
            <person name="Nakamura Y."/>
            <person name="Sato S."/>
            <person name="Kato T."/>
            <person name="Asamizu E."/>
            <person name="Sasamoto S."/>
            <person name="Kimura T."/>
            <person name="Idesawa K."/>
            <person name="Kawashima K."/>
            <person name="Kishida Y."/>
            <person name="Kiyokawa C."/>
            <person name="Kohara M."/>
            <person name="Matsumoto M."/>
            <person name="Matsuno A."/>
            <person name="Muraki A."/>
            <person name="Nakayama S."/>
            <person name="Nakazaki N."/>
            <person name="Shinpo S."/>
            <person name="Takeuchi C."/>
            <person name="Wada T."/>
            <person name="Watanabe A."/>
            <person name="Yamada M."/>
            <person name="Yasuda M."/>
            <person name="Tabata S."/>
        </authorList>
    </citation>
    <scope>NUCLEOTIDE SEQUENCE [LARGE SCALE GENOMIC DNA]</scope>
    <source>
        <strain>cv. Columbia</strain>
    </source>
</reference>
<reference key="3">
    <citation type="journal article" date="2017" name="Plant J.">
        <title>Araport11: a complete reannotation of the Arabidopsis thaliana reference genome.</title>
        <authorList>
            <person name="Cheng C.Y."/>
            <person name="Krishnakumar V."/>
            <person name="Chan A.P."/>
            <person name="Thibaud-Nissen F."/>
            <person name="Schobel S."/>
            <person name="Town C.D."/>
        </authorList>
    </citation>
    <scope>GENOME REANNOTATION</scope>
    <source>
        <strain>cv. Columbia</strain>
    </source>
</reference>
<reference key="4">
    <citation type="journal article" date="2002" name="Science">
        <title>Functional annotation of a full-length Arabidopsis cDNA collection.</title>
        <authorList>
            <person name="Seki M."/>
            <person name="Narusaka M."/>
            <person name="Kamiya A."/>
            <person name="Ishida J."/>
            <person name="Satou M."/>
            <person name="Sakurai T."/>
            <person name="Nakajima M."/>
            <person name="Enju A."/>
            <person name="Akiyama K."/>
            <person name="Oono Y."/>
            <person name="Muramatsu M."/>
            <person name="Hayashizaki Y."/>
            <person name="Kawai J."/>
            <person name="Carninci P."/>
            <person name="Itoh M."/>
            <person name="Ishii Y."/>
            <person name="Arakawa T."/>
            <person name="Shibata K."/>
            <person name="Shinagawa A."/>
            <person name="Shinozaki K."/>
        </authorList>
    </citation>
    <scope>NUCLEOTIDE SEQUENCE [LARGE SCALE MRNA]</scope>
    <source>
        <strain>cv. Columbia</strain>
    </source>
</reference>
<reference key="5">
    <citation type="journal article" date="2003" name="Science">
        <title>Empirical analysis of transcriptional activity in the Arabidopsis genome.</title>
        <authorList>
            <person name="Yamada K."/>
            <person name="Lim J."/>
            <person name="Dale J.M."/>
            <person name="Chen H."/>
            <person name="Shinn P."/>
            <person name="Palm C.J."/>
            <person name="Southwick A.M."/>
            <person name="Wu H.C."/>
            <person name="Kim C.J."/>
            <person name="Nguyen M."/>
            <person name="Pham P.K."/>
            <person name="Cheuk R.F."/>
            <person name="Karlin-Newmann G."/>
            <person name="Liu S.X."/>
            <person name="Lam B."/>
            <person name="Sakano H."/>
            <person name="Wu T."/>
            <person name="Yu G."/>
            <person name="Miranda M."/>
            <person name="Quach H.L."/>
            <person name="Tripp M."/>
            <person name="Chang C.H."/>
            <person name="Lee J.M."/>
            <person name="Toriumi M.J."/>
            <person name="Chan M.M."/>
            <person name="Tang C.C."/>
            <person name="Onodera C.S."/>
            <person name="Deng J.M."/>
            <person name="Akiyama K."/>
            <person name="Ansari Y."/>
            <person name="Arakawa T."/>
            <person name="Banh J."/>
            <person name="Banno F."/>
            <person name="Bowser L."/>
            <person name="Brooks S.Y."/>
            <person name="Carninci P."/>
            <person name="Chao Q."/>
            <person name="Choy N."/>
            <person name="Enju A."/>
            <person name="Goldsmith A.D."/>
            <person name="Gurjal M."/>
            <person name="Hansen N.F."/>
            <person name="Hayashizaki Y."/>
            <person name="Johnson-Hopson C."/>
            <person name="Hsuan V.W."/>
            <person name="Iida K."/>
            <person name="Karnes M."/>
            <person name="Khan S."/>
            <person name="Koesema E."/>
            <person name="Ishida J."/>
            <person name="Jiang P.X."/>
            <person name="Jones T."/>
            <person name="Kawai J."/>
            <person name="Kamiya A."/>
            <person name="Meyers C."/>
            <person name="Nakajima M."/>
            <person name="Narusaka M."/>
            <person name="Seki M."/>
            <person name="Sakurai T."/>
            <person name="Satou M."/>
            <person name="Tamse R."/>
            <person name="Vaysberg M."/>
            <person name="Wallender E.K."/>
            <person name="Wong C."/>
            <person name="Yamamura Y."/>
            <person name="Yuan S."/>
            <person name="Shinozaki K."/>
            <person name="Davis R.W."/>
            <person name="Theologis A."/>
            <person name="Ecker J.R."/>
        </authorList>
    </citation>
    <scope>NUCLEOTIDE SEQUENCE [LARGE SCALE MRNA]</scope>
    <source>
        <strain>cv. Columbia</strain>
    </source>
</reference>
<keyword id="KW-1185">Reference proteome</keyword>
<keyword id="KW-0677">Repeat</keyword>
<organism>
    <name type="scientific">Arabidopsis thaliana</name>
    <name type="common">Mouse-ear cress</name>
    <dbReference type="NCBI Taxonomy" id="3702"/>
    <lineage>
        <taxon>Eukaryota</taxon>
        <taxon>Viridiplantae</taxon>
        <taxon>Streptophyta</taxon>
        <taxon>Embryophyta</taxon>
        <taxon>Tracheophyta</taxon>
        <taxon>Spermatophyta</taxon>
        <taxon>Magnoliopsida</taxon>
        <taxon>eudicotyledons</taxon>
        <taxon>Gunneridae</taxon>
        <taxon>Pentapetalae</taxon>
        <taxon>rosids</taxon>
        <taxon>malvids</taxon>
        <taxon>Brassicales</taxon>
        <taxon>Brassicaceae</taxon>
        <taxon>Camelineae</taxon>
        <taxon>Arabidopsis</taxon>
    </lineage>
</organism>
<dbReference type="EMBL" id="AF528062">
    <property type="protein sequence ID" value="AAM93431.1"/>
    <property type="molecule type" value="mRNA"/>
</dbReference>
<dbReference type="EMBL" id="AC010797">
    <property type="protein sequence ID" value="AAF03449.1"/>
    <property type="status" value="ALT_SEQ"/>
    <property type="molecule type" value="Genomic_DNA"/>
</dbReference>
<dbReference type="EMBL" id="AC011664">
    <property type="protein sequence ID" value="AAF14836.1"/>
    <property type="molecule type" value="Genomic_DNA"/>
</dbReference>
<dbReference type="EMBL" id="CP002686">
    <property type="protein sequence ID" value="AEE73747.1"/>
    <property type="molecule type" value="Genomic_DNA"/>
</dbReference>
<dbReference type="EMBL" id="CP002686">
    <property type="protein sequence ID" value="ANM65498.1"/>
    <property type="molecule type" value="Genomic_DNA"/>
</dbReference>
<dbReference type="EMBL" id="AK118222">
    <property type="protein sequence ID" value="BAC42843.1"/>
    <property type="molecule type" value="mRNA"/>
</dbReference>
<dbReference type="EMBL" id="BT005556">
    <property type="protein sequence ID" value="AAO63976.1"/>
    <property type="molecule type" value="mRNA"/>
</dbReference>
<dbReference type="RefSeq" id="NP_001319446.1">
    <property type="nucleotide sequence ID" value="NM_001337368.1"/>
</dbReference>
<dbReference type="RefSeq" id="NP_186848.1">
    <property type="nucleotide sequence ID" value="NM_111065.3"/>
</dbReference>
<dbReference type="FunCoup" id="Q9SGA0">
    <property type="interactions" value="5"/>
</dbReference>
<dbReference type="IntAct" id="Q9SGA0">
    <property type="interactions" value="9"/>
</dbReference>
<dbReference type="STRING" id="3702.Q9SGA0"/>
<dbReference type="iPTMnet" id="Q9SGA0"/>
<dbReference type="PaxDb" id="3702-AT3G01990.1"/>
<dbReference type="ProteomicsDB" id="244795"/>
<dbReference type="EnsemblPlants" id="AT3G01990.1">
    <property type="protein sequence ID" value="AT3G01990.1"/>
    <property type="gene ID" value="AT3G01990"/>
</dbReference>
<dbReference type="EnsemblPlants" id="AT3G01990.10">
    <property type="protein sequence ID" value="AT3G01990.10"/>
    <property type="gene ID" value="AT3G01990"/>
</dbReference>
<dbReference type="GeneID" id="821217"/>
<dbReference type="Gramene" id="AT3G01990.1">
    <property type="protein sequence ID" value="AT3G01990.1"/>
    <property type="gene ID" value="AT3G01990"/>
</dbReference>
<dbReference type="Gramene" id="AT3G01990.10">
    <property type="protein sequence ID" value="AT3G01990.10"/>
    <property type="gene ID" value="AT3G01990"/>
</dbReference>
<dbReference type="KEGG" id="ath:AT3G01990"/>
<dbReference type="Araport" id="AT3G01990"/>
<dbReference type="TAIR" id="AT3G01990">
    <property type="gene designation" value="ACR6"/>
</dbReference>
<dbReference type="eggNOG" id="ENOG502QT1H">
    <property type="taxonomic scope" value="Eukaryota"/>
</dbReference>
<dbReference type="HOGENOM" id="CLU_031332_3_0_1"/>
<dbReference type="InParanoid" id="Q9SGA0"/>
<dbReference type="OMA" id="HAVRCEA"/>
<dbReference type="PhylomeDB" id="Q9SGA0"/>
<dbReference type="PRO" id="PR:Q9SGA0"/>
<dbReference type="Proteomes" id="UP000006548">
    <property type="component" value="Chromosome 3"/>
</dbReference>
<dbReference type="ExpressionAtlas" id="Q9SGA0">
    <property type="expression patterns" value="baseline and differential"/>
</dbReference>
<dbReference type="GO" id="GO:0016597">
    <property type="term" value="F:amino acid binding"/>
    <property type="evidence" value="ECO:0000250"/>
    <property type="project" value="TAIR"/>
</dbReference>
<dbReference type="CDD" id="cd04925">
    <property type="entry name" value="ACT_ACR_2"/>
    <property type="match status" value="1"/>
</dbReference>
<dbReference type="CDD" id="cd04897">
    <property type="entry name" value="ACT_ACR_3"/>
    <property type="match status" value="1"/>
</dbReference>
<dbReference type="CDD" id="cd04926">
    <property type="entry name" value="ACT_ACR_4"/>
    <property type="match status" value="1"/>
</dbReference>
<dbReference type="FunFam" id="3.30.70.260:FF:000060">
    <property type="entry name" value="ACT domain repeat 6"/>
    <property type="match status" value="1"/>
</dbReference>
<dbReference type="FunFam" id="3.30.70.260:FF:000063">
    <property type="entry name" value="ACT domain repeat 6"/>
    <property type="match status" value="1"/>
</dbReference>
<dbReference type="Gene3D" id="3.30.70.260">
    <property type="match status" value="2"/>
</dbReference>
<dbReference type="InterPro" id="IPR040217">
    <property type="entry name" value="ACR1-12"/>
</dbReference>
<dbReference type="InterPro" id="IPR045865">
    <property type="entry name" value="ACT-like_dom_sf"/>
</dbReference>
<dbReference type="InterPro" id="IPR002912">
    <property type="entry name" value="ACT_dom"/>
</dbReference>
<dbReference type="PANTHER" id="PTHR31096">
    <property type="entry name" value="ACT DOMAIN-CONTAINING PROTEIN ACR4-RELATED"/>
    <property type="match status" value="1"/>
</dbReference>
<dbReference type="PANTHER" id="PTHR31096:SF55">
    <property type="entry name" value="ACT DOMAIN-CONTAINING PROTEIN ACR6"/>
    <property type="match status" value="1"/>
</dbReference>
<dbReference type="Pfam" id="PF01842">
    <property type="entry name" value="ACT"/>
    <property type="match status" value="2"/>
</dbReference>
<dbReference type="Pfam" id="PF24931">
    <property type="entry name" value="ACT_ACR9_3rd"/>
    <property type="match status" value="1"/>
</dbReference>
<dbReference type="SUPFAM" id="SSF55021">
    <property type="entry name" value="ACT-like"/>
    <property type="match status" value="3"/>
</dbReference>
<dbReference type="PROSITE" id="PS51671">
    <property type="entry name" value="ACT"/>
    <property type="match status" value="3"/>
</dbReference>